<organism>
    <name type="scientific">Pseudomonas fluorescens (strain ATCC BAA-477 / NRRL B-23932 / Pf-5)</name>
    <dbReference type="NCBI Taxonomy" id="220664"/>
    <lineage>
        <taxon>Bacteria</taxon>
        <taxon>Pseudomonadati</taxon>
        <taxon>Pseudomonadota</taxon>
        <taxon>Gammaproteobacteria</taxon>
        <taxon>Pseudomonadales</taxon>
        <taxon>Pseudomonadaceae</taxon>
        <taxon>Pseudomonas</taxon>
    </lineage>
</organism>
<proteinExistence type="inferred from homology"/>
<gene>
    <name evidence="1" type="primary">leuC</name>
    <name type="ordered locus">PFL_2063</name>
</gene>
<evidence type="ECO:0000255" key="1">
    <source>
        <dbReference type="HAMAP-Rule" id="MF_01026"/>
    </source>
</evidence>
<reference key="1">
    <citation type="journal article" date="2005" name="Nat. Biotechnol.">
        <title>Complete genome sequence of the plant commensal Pseudomonas fluorescens Pf-5.</title>
        <authorList>
            <person name="Paulsen I.T."/>
            <person name="Press C.M."/>
            <person name="Ravel J."/>
            <person name="Kobayashi D.Y."/>
            <person name="Myers G.S.A."/>
            <person name="Mavrodi D.V."/>
            <person name="DeBoy R.T."/>
            <person name="Seshadri R."/>
            <person name="Ren Q."/>
            <person name="Madupu R."/>
            <person name="Dodson R.J."/>
            <person name="Durkin A.S."/>
            <person name="Brinkac L.M."/>
            <person name="Daugherty S.C."/>
            <person name="Sullivan S.A."/>
            <person name="Rosovitz M.J."/>
            <person name="Gwinn M.L."/>
            <person name="Zhou L."/>
            <person name="Schneider D.J."/>
            <person name="Cartinhour S.W."/>
            <person name="Nelson W.C."/>
            <person name="Weidman J."/>
            <person name="Watkins K."/>
            <person name="Tran K."/>
            <person name="Khouri H."/>
            <person name="Pierson E.A."/>
            <person name="Pierson L.S. III"/>
            <person name="Thomashow L.S."/>
            <person name="Loper J.E."/>
        </authorList>
    </citation>
    <scope>NUCLEOTIDE SEQUENCE [LARGE SCALE GENOMIC DNA]</scope>
    <source>
        <strain>ATCC BAA-477 / NRRL B-23932 / Pf-5</strain>
    </source>
</reference>
<keyword id="KW-0004">4Fe-4S</keyword>
<keyword id="KW-0028">Amino-acid biosynthesis</keyword>
<keyword id="KW-0100">Branched-chain amino acid biosynthesis</keyword>
<keyword id="KW-0408">Iron</keyword>
<keyword id="KW-0411">Iron-sulfur</keyword>
<keyword id="KW-0432">Leucine biosynthesis</keyword>
<keyword id="KW-0456">Lyase</keyword>
<keyword id="KW-0479">Metal-binding</keyword>
<sequence>MAGKTLYDKLWDSHLVKQRDDGSALIYIDRHIIHEVTSPQAFEGLRLAGRKPWRIDANIATPDHNVPTTPERKGGIEAIADQVSRLQVQTLDDNCDEYGIVEFKMNDVRQGIVHVIGPEQGATLPGMTVVCGDSHTSTHGAFGALAHGIGTSEVEHVLATQCLVAKKMKNMLVRVEGTLPFGVTAKDIVLAVIGKIGTAGGNGHAIEFAGSAIRELSVEGRMTICNMSIEAGARVGLVAADEKTVAYVKGRPFAPKDAEWDLAVEAWKDLVSDADAKFDTVVELDAAQIKPQVSWGTSPEMVLAVDQNVPDPAKEMDLVKRDSIVRALKYMGLSANQAITDIQLDRVFIGSCTNSRIEDLRAAAVIAKGRKVASTIKQAIVVPGSGLVKAQAESEGLDKIFLEAGFEWREPGCSMCLAMNPDRLESGEHCASTSNRNFEGRQGAGGRTHLVSPAMAAAAAVSGRFVDVRELI</sequence>
<comment type="function">
    <text evidence="1">Catalyzes the isomerization between 2-isopropylmalate and 3-isopropylmalate, via the formation of 2-isopropylmaleate.</text>
</comment>
<comment type="catalytic activity">
    <reaction evidence="1">
        <text>(2R,3S)-3-isopropylmalate = (2S)-2-isopropylmalate</text>
        <dbReference type="Rhea" id="RHEA:32287"/>
        <dbReference type="ChEBI" id="CHEBI:1178"/>
        <dbReference type="ChEBI" id="CHEBI:35121"/>
        <dbReference type="EC" id="4.2.1.33"/>
    </reaction>
</comment>
<comment type="cofactor">
    <cofactor evidence="1">
        <name>[4Fe-4S] cluster</name>
        <dbReference type="ChEBI" id="CHEBI:49883"/>
    </cofactor>
    <text evidence="1">Binds 1 [4Fe-4S] cluster per subunit.</text>
</comment>
<comment type="pathway">
    <text evidence="1">Amino-acid biosynthesis; L-leucine biosynthesis; L-leucine from 3-methyl-2-oxobutanoate: step 2/4.</text>
</comment>
<comment type="subunit">
    <text evidence="1">Heterodimer of LeuC and LeuD.</text>
</comment>
<comment type="similarity">
    <text evidence="1">Belongs to the aconitase/IPM isomerase family. LeuC type 1 subfamily.</text>
</comment>
<accession>Q4KF08</accession>
<name>LEUC_PSEF5</name>
<feature type="chain" id="PRO_0000076785" description="3-isopropylmalate dehydratase large subunit">
    <location>
        <begin position="1"/>
        <end position="472"/>
    </location>
</feature>
<feature type="binding site" evidence="1">
    <location>
        <position position="352"/>
    </location>
    <ligand>
        <name>[4Fe-4S] cluster</name>
        <dbReference type="ChEBI" id="CHEBI:49883"/>
    </ligand>
</feature>
<feature type="binding site" evidence="1">
    <location>
        <position position="413"/>
    </location>
    <ligand>
        <name>[4Fe-4S] cluster</name>
        <dbReference type="ChEBI" id="CHEBI:49883"/>
    </ligand>
</feature>
<feature type="binding site" evidence="1">
    <location>
        <position position="416"/>
    </location>
    <ligand>
        <name>[4Fe-4S] cluster</name>
        <dbReference type="ChEBI" id="CHEBI:49883"/>
    </ligand>
</feature>
<protein>
    <recommendedName>
        <fullName evidence="1">3-isopropylmalate dehydratase large subunit</fullName>
        <ecNumber evidence="1">4.2.1.33</ecNumber>
    </recommendedName>
    <alternativeName>
        <fullName evidence="1">Alpha-IPM isomerase</fullName>
        <shortName evidence="1">IPMI</shortName>
    </alternativeName>
    <alternativeName>
        <fullName evidence="1">Isopropylmalate isomerase</fullName>
    </alternativeName>
</protein>
<dbReference type="EC" id="4.2.1.33" evidence="1"/>
<dbReference type="EMBL" id="CP000076">
    <property type="protein sequence ID" value="AAY91342.1"/>
    <property type="molecule type" value="Genomic_DNA"/>
</dbReference>
<dbReference type="RefSeq" id="WP_011060375.1">
    <property type="nucleotide sequence ID" value="NC_004129.6"/>
</dbReference>
<dbReference type="SMR" id="Q4KF08"/>
<dbReference type="STRING" id="220664.PFL_2063"/>
<dbReference type="KEGG" id="pfl:PFL_2063"/>
<dbReference type="PATRIC" id="fig|220664.5.peg.2095"/>
<dbReference type="eggNOG" id="COG0065">
    <property type="taxonomic scope" value="Bacteria"/>
</dbReference>
<dbReference type="HOGENOM" id="CLU_006714_3_4_6"/>
<dbReference type="UniPathway" id="UPA00048">
    <property type="reaction ID" value="UER00071"/>
</dbReference>
<dbReference type="Proteomes" id="UP000008540">
    <property type="component" value="Chromosome"/>
</dbReference>
<dbReference type="GO" id="GO:0003861">
    <property type="term" value="F:3-isopropylmalate dehydratase activity"/>
    <property type="evidence" value="ECO:0007669"/>
    <property type="project" value="UniProtKB-UniRule"/>
</dbReference>
<dbReference type="GO" id="GO:0051539">
    <property type="term" value="F:4 iron, 4 sulfur cluster binding"/>
    <property type="evidence" value="ECO:0007669"/>
    <property type="project" value="UniProtKB-KW"/>
</dbReference>
<dbReference type="GO" id="GO:0046872">
    <property type="term" value="F:metal ion binding"/>
    <property type="evidence" value="ECO:0007669"/>
    <property type="project" value="UniProtKB-KW"/>
</dbReference>
<dbReference type="GO" id="GO:0009098">
    <property type="term" value="P:L-leucine biosynthetic process"/>
    <property type="evidence" value="ECO:0007669"/>
    <property type="project" value="UniProtKB-UniRule"/>
</dbReference>
<dbReference type="CDD" id="cd01583">
    <property type="entry name" value="IPMI"/>
    <property type="match status" value="1"/>
</dbReference>
<dbReference type="FunFam" id="3.30.499.10:FF:000007">
    <property type="entry name" value="3-isopropylmalate dehydratase large subunit"/>
    <property type="match status" value="1"/>
</dbReference>
<dbReference type="Gene3D" id="3.30.499.10">
    <property type="entry name" value="Aconitase, domain 3"/>
    <property type="match status" value="2"/>
</dbReference>
<dbReference type="HAMAP" id="MF_01026">
    <property type="entry name" value="LeuC_type1"/>
    <property type="match status" value="1"/>
</dbReference>
<dbReference type="InterPro" id="IPR004430">
    <property type="entry name" value="3-IsopropMal_deHydase_lsu"/>
</dbReference>
<dbReference type="InterPro" id="IPR015931">
    <property type="entry name" value="Acnase/IPM_dHydase_lsu_aba_1/3"/>
</dbReference>
<dbReference type="InterPro" id="IPR001030">
    <property type="entry name" value="Acoase/IPM_deHydtase_lsu_aba"/>
</dbReference>
<dbReference type="InterPro" id="IPR018136">
    <property type="entry name" value="Aconitase_4Fe-4S_BS"/>
</dbReference>
<dbReference type="InterPro" id="IPR036008">
    <property type="entry name" value="Aconitase_4Fe-4S_dom"/>
</dbReference>
<dbReference type="InterPro" id="IPR050067">
    <property type="entry name" value="IPM_dehydratase_rel_enz"/>
</dbReference>
<dbReference type="InterPro" id="IPR033941">
    <property type="entry name" value="IPMI_cat"/>
</dbReference>
<dbReference type="NCBIfam" id="TIGR00170">
    <property type="entry name" value="leuC"/>
    <property type="match status" value="1"/>
</dbReference>
<dbReference type="NCBIfam" id="NF004016">
    <property type="entry name" value="PRK05478.1"/>
    <property type="match status" value="1"/>
</dbReference>
<dbReference type="NCBIfam" id="NF009116">
    <property type="entry name" value="PRK12466.1"/>
    <property type="match status" value="1"/>
</dbReference>
<dbReference type="PANTHER" id="PTHR43822:SF9">
    <property type="entry name" value="3-ISOPROPYLMALATE DEHYDRATASE"/>
    <property type="match status" value="1"/>
</dbReference>
<dbReference type="PANTHER" id="PTHR43822">
    <property type="entry name" value="HOMOACONITASE, MITOCHONDRIAL-RELATED"/>
    <property type="match status" value="1"/>
</dbReference>
<dbReference type="Pfam" id="PF00330">
    <property type="entry name" value="Aconitase"/>
    <property type="match status" value="1"/>
</dbReference>
<dbReference type="PRINTS" id="PR00415">
    <property type="entry name" value="ACONITASE"/>
</dbReference>
<dbReference type="SUPFAM" id="SSF53732">
    <property type="entry name" value="Aconitase iron-sulfur domain"/>
    <property type="match status" value="1"/>
</dbReference>
<dbReference type="PROSITE" id="PS00450">
    <property type="entry name" value="ACONITASE_1"/>
    <property type="match status" value="1"/>
</dbReference>
<dbReference type="PROSITE" id="PS01244">
    <property type="entry name" value="ACONITASE_2"/>
    <property type="match status" value="1"/>
</dbReference>